<sequence>MQEIEQRIYLAATYDTKGEEAEYLRQLLRRDGVMVVTVDVATSGQGSPAMVSAQEVAACYPQGAQAVFTGERGSAIVAMALAFERYLAGQRDVGAVLGIGGSGGTALVTPAMRALPVGVPKLMVSTMASGNVAPYVGPSDIAMMYSVTDVAGLNRISRRVLANAAGAIAGAFRQARQPIADDGRPAVGITMFGVTTPCVQHVTAALHDRYDCLVFHATGTGGQSMEKLADSGLLAGVLDLTTTEVCDFLFGGVLACTDDRFGAIARSGVPYVGSCGALDMVNFGALDTVPAACRERLLYPHNPQVTLMRTTAQENARQGAWIAERLNRCEGQVRFLIPEGGVSALDAPGQAFYDEAADAALFQALYDHVRQTDRRRLVRVPCHINDPLFARAAVEQFHEISQ</sequence>
<dbReference type="EMBL" id="BX640428">
    <property type="protein sequence ID" value="CAE37119.1"/>
    <property type="molecule type" value="Genomic_DNA"/>
</dbReference>
<dbReference type="RefSeq" id="WP_010928219.1">
    <property type="nucleotide sequence ID" value="NC_002928.3"/>
</dbReference>
<dbReference type="SMR" id="Q7W9E3"/>
<dbReference type="GeneID" id="93203584"/>
<dbReference type="KEGG" id="bpa:BPP1817"/>
<dbReference type="HOGENOM" id="CLU_036813_1_0_4"/>
<dbReference type="Proteomes" id="UP000001421">
    <property type="component" value="Chromosome"/>
</dbReference>
<dbReference type="CDD" id="cd15488">
    <property type="entry name" value="Tm-1-like"/>
    <property type="match status" value="1"/>
</dbReference>
<dbReference type="Gene3D" id="3.40.50.12030">
    <property type="entry name" value="Uncharacterised protein family UPF0261, NC domain"/>
    <property type="match status" value="1"/>
</dbReference>
<dbReference type="Gene3D" id="3.40.50.12020">
    <property type="entry name" value="Uncharacterised protein family UPF0261, NN domain"/>
    <property type="match status" value="1"/>
</dbReference>
<dbReference type="HAMAP" id="MF_00677">
    <property type="entry name" value="UPF0261"/>
    <property type="match status" value="1"/>
</dbReference>
<dbReference type="InterPro" id="IPR051353">
    <property type="entry name" value="Tobamovirus_resist_UPF0261"/>
</dbReference>
<dbReference type="InterPro" id="IPR008322">
    <property type="entry name" value="UPF0261"/>
</dbReference>
<dbReference type="InterPro" id="IPR056778">
    <property type="entry name" value="UPF0261_C"/>
</dbReference>
<dbReference type="InterPro" id="IPR044122">
    <property type="entry name" value="UPF0261_N"/>
</dbReference>
<dbReference type="NCBIfam" id="NF002673">
    <property type="entry name" value="PRK02399.1-1"/>
    <property type="match status" value="1"/>
</dbReference>
<dbReference type="NCBIfam" id="NF002674">
    <property type="entry name" value="PRK02399.1-2"/>
    <property type="match status" value="1"/>
</dbReference>
<dbReference type="PANTHER" id="PTHR31862">
    <property type="entry name" value="UPF0261 DOMAIN PROTEIN (AFU_ORTHOLOGUE AFUA_1G10120)"/>
    <property type="match status" value="1"/>
</dbReference>
<dbReference type="PANTHER" id="PTHR31862:SF1">
    <property type="entry name" value="UPF0261 DOMAIN PROTEIN (AFU_ORTHOLOGUE AFUA_1G10120)"/>
    <property type="match status" value="1"/>
</dbReference>
<dbReference type="Pfam" id="PF06792">
    <property type="entry name" value="UPF0261"/>
    <property type="match status" value="1"/>
</dbReference>
<dbReference type="Pfam" id="PF23189">
    <property type="entry name" value="UPF0261_C"/>
    <property type="match status" value="1"/>
</dbReference>
<dbReference type="PIRSF" id="PIRSF033271">
    <property type="entry name" value="UCP033271"/>
    <property type="match status" value="1"/>
</dbReference>
<comment type="similarity">
    <text evidence="1">Belongs to the UPF0261 family.</text>
</comment>
<name>Y1817_BORPA</name>
<gene>
    <name type="ordered locus">BPP1817</name>
</gene>
<organism>
    <name type="scientific">Bordetella parapertussis (strain 12822 / ATCC BAA-587 / NCTC 13253)</name>
    <dbReference type="NCBI Taxonomy" id="257311"/>
    <lineage>
        <taxon>Bacteria</taxon>
        <taxon>Pseudomonadati</taxon>
        <taxon>Pseudomonadota</taxon>
        <taxon>Betaproteobacteria</taxon>
        <taxon>Burkholderiales</taxon>
        <taxon>Alcaligenaceae</taxon>
        <taxon>Bordetella</taxon>
    </lineage>
</organism>
<reference key="1">
    <citation type="journal article" date="2003" name="Nat. Genet.">
        <title>Comparative analysis of the genome sequences of Bordetella pertussis, Bordetella parapertussis and Bordetella bronchiseptica.</title>
        <authorList>
            <person name="Parkhill J."/>
            <person name="Sebaihia M."/>
            <person name="Preston A."/>
            <person name="Murphy L.D."/>
            <person name="Thomson N.R."/>
            <person name="Harris D.E."/>
            <person name="Holden M.T.G."/>
            <person name="Churcher C.M."/>
            <person name="Bentley S.D."/>
            <person name="Mungall K.L."/>
            <person name="Cerdeno-Tarraga A.-M."/>
            <person name="Temple L."/>
            <person name="James K.D."/>
            <person name="Harris B."/>
            <person name="Quail M.A."/>
            <person name="Achtman M."/>
            <person name="Atkin R."/>
            <person name="Baker S."/>
            <person name="Basham D."/>
            <person name="Bason N."/>
            <person name="Cherevach I."/>
            <person name="Chillingworth T."/>
            <person name="Collins M."/>
            <person name="Cronin A."/>
            <person name="Davis P."/>
            <person name="Doggett J."/>
            <person name="Feltwell T."/>
            <person name="Goble A."/>
            <person name="Hamlin N."/>
            <person name="Hauser H."/>
            <person name="Holroyd S."/>
            <person name="Jagels K."/>
            <person name="Leather S."/>
            <person name="Moule S."/>
            <person name="Norberczak H."/>
            <person name="O'Neil S."/>
            <person name="Ormond D."/>
            <person name="Price C."/>
            <person name="Rabbinowitsch E."/>
            <person name="Rutter S."/>
            <person name="Sanders M."/>
            <person name="Saunders D."/>
            <person name="Seeger K."/>
            <person name="Sharp S."/>
            <person name="Simmonds M."/>
            <person name="Skelton J."/>
            <person name="Squares R."/>
            <person name="Squares S."/>
            <person name="Stevens K."/>
            <person name="Unwin L."/>
            <person name="Whitehead S."/>
            <person name="Barrell B.G."/>
            <person name="Maskell D.J."/>
        </authorList>
    </citation>
    <scope>NUCLEOTIDE SEQUENCE [LARGE SCALE GENOMIC DNA]</scope>
    <source>
        <strain>12822 / ATCC BAA-587 / NCTC 13253</strain>
    </source>
</reference>
<feature type="chain" id="PRO_0000220207" description="UPF0261 protein BPP1817">
    <location>
        <begin position="1"/>
        <end position="402"/>
    </location>
</feature>
<protein>
    <recommendedName>
        <fullName evidence="1">UPF0261 protein BPP1817</fullName>
    </recommendedName>
</protein>
<accession>Q7W9E3</accession>
<proteinExistence type="inferred from homology"/>
<evidence type="ECO:0000255" key="1">
    <source>
        <dbReference type="HAMAP-Rule" id="MF_00677"/>
    </source>
</evidence>